<organism>
    <name type="scientific">Delftia acidovorans (strain DSM 14801 / SPH-1)</name>
    <dbReference type="NCBI Taxonomy" id="398578"/>
    <lineage>
        <taxon>Bacteria</taxon>
        <taxon>Pseudomonadati</taxon>
        <taxon>Pseudomonadota</taxon>
        <taxon>Betaproteobacteria</taxon>
        <taxon>Burkholderiales</taxon>
        <taxon>Comamonadaceae</taxon>
        <taxon>Delftia</taxon>
    </lineage>
</organism>
<reference key="1">
    <citation type="submission" date="2007-11" db="EMBL/GenBank/DDBJ databases">
        <title>Complete sequence of Delftia acidovorans DSM 14801 / SPH-1.</title>
        <authorList>
            <person name="Copeland A."/>
            <person name="Lucas S."/>
            <person name="Lapidus A."/>
            <person name="Barry K."/>
            <person name="Glavina del Rio T."/>
            <person name="Dalin E."/>
            <person name="Tice H."/>
            <person name="Pitluck S."/>
            <person name="Lowry S."/>
            <person name="Clum A."/>
            <person name="Schmutz J."/>
            <person name="Larimer F."/>
            <person name="Land M."/>
            <person name="Hauser L."/>
            <person name="Kyrpides N."/>
            <person name="Kim E."/>
            <person name="Schleheck D."/>
            <person name="Richardson P."/>
        </authorList>
    </citation>
    <scope>NUCLEOTIDE SEQUENCE [LARGE SCALE GENOMIC DNA]</scope>
    <source>
        <strain>DSM 14801 / SPH-1</strain>
    </source>
</reference>
<accession>A9BRX0</accession>
<name>RL15_DELAS</name>
<protein>
    <recommendedName>
        <fullName evidence="1">Large ribosomal subunit protein uL15</fullName>
    </recommendedName>
    <alternativeName>
        <fullName evidence="3">50S ribosomal protein L15</fullName>
    </alternativeName>
</protein>
<evidence type="ECO:0000255" key="1">
    <source>
        <dbReference type="HAMAP-Rule" id="MF_01341"/>
    </source>
</evidence>
<evidence type="ECO:0000256" key="2">
    <source>
        <dbReference type="SAM" id="MobiDB-lite"/>
    </source>
</evidence>
<evidence type="ECO:0000305" key="3"/>
<proteinExistence type="inferred from homology"/>
<sequence length="143" mass="14703">MELNSIKPAEGSKHAKRRVGRGIGSGLGKTAGRGHKGQKSRSGGYHKVGFEGGQMPLQRRLPKRGFKSHLLKFNAEVTLSALEQLGLAEVDLAALKQAGLVGEIAKVVKIIKSGEISKAVKLNGIGATAGAKAAIEAAGGSIA</sequence>
<keyword id="KW-1185">Reference proteome</keyword>
<keyword id="KW-0687">Ribonucleoprotein</keyword>
<keyword id="KW-0689">Ribosomal protein</keyword>
<keyword id="KW-0694">RNA-binding</keyword>
<keyword id="KW-0699">rRNA-binding</keyword>
<feature type="chain" id="PRO_1000142805" description="Large ribosomal subunit protein uL15">
    <location>
        <begin position="1"/>
        <end position="143"/>
    </location>
</feature>
<feature type="region of interest" description="Disordered" evidence="2">
    <location>
        <begin position="1"/>
        <end position="56"/>
    </location>
</feature>
<feature type="compositionally biased region" description="Gly residues" evidence="2">
    <location>
        <begin position="21"/>
        <end position="31"/>
    </location>
</feature>
<gene>
    <name evidence="1" type="primary">rplO</name>
    <name type="ordered locus">Daci_1041</name>
</gene>
<comment type="function">
    <text evidence="1">Binds to the 23S rRNA.</text>
</comment>
<comment type="subunit">
    <text evidence="1">Part of the 50S ribosomal subunit.</text>
</comment>
<comment type="similarity">
    <text evidence="1">Belongs to the universal ribosomal protein uL15 family.</text>
</comment>
<dbReference type="EMBL" id="CP000884">
    <property type="protein sequence ID" value="ABX33687.1"/>
    <property type="molecule type" value="Genomic_DNA"/>
</dbReference>
<dbReference type="RefSeq" id="WP_012202973.1">
    <property type="nucleotide sequence ID" value="NC_010002.1"/>
</dbReference>
<dbReference type="SMR" id="A9BRX0"/>
<dbReference type="STRING" id="398578.Daci_1041"/>
<dbReference type="GeneID" id="24115082"/>
<dbReference type="KEGG" id="dac:Daci_1041"/>
<dbReference type="eggNOG" id="COG0200">
    <property type="taxonomic scope" value="Bacteria"/>
</dbReference>
<dbReference type="HOGENOM" id="CLU_055188_4_2_4"/>
<dbReference type="Proteomes" id="UP000000784">
    <property type="component" value="Chromosome"/>
</dbReference>
<dbReference type="GO" id="GO:0022625">
    <property type="term" value="C:cytosolic large ribosomal subunit"/>
    <property type="evidence" value="ECO:0007669"/>
    <property type="project" value="TreeGrafter"/>
</dbReference>
<dbReference type="GO" id="GO:0019843">
    <property type="term" value="F:rRNA binding"/>
    <property type="evidence" value="ECO:0007669"/>
    <property type="project" value="UniProtKB-UniRule"/>
</dbReference>
<dbReference type="GO" id="GO:0003735">
    <property type="term" value="F:structural constituent of ribosome"/>
    <property type="evidence" value="ECO:0007669"/>
    <property type="project" value="InterPro"/>
</dbReference>
<dbReference type="GO" id="GO:0006412">
    <property type="term" value="P:translation"/>
    <property type="evidence" value="ECO:0007669"/>
    <property type="project" value="UniProtKB-UniRule"/>
</dbReference>
<dbReference type="Gene3D" id="3.100.10.10">
    <property type="match status" value="1"/>
</dbReference>
<dbReference type="HAMAP" id="MF_01341">
    <property type="entry name" value="Ribosomal_uL15"/>
    <property type="match status" value="1"/>
</dbReference>
<dbReference type="InterPro" id="IPR030878">
    <property type="entry name" value="Ribosomal_uL15"/>
</dbReference>
<dbReference type="InterPro" id="IPR021131">
    <property type="entry name" value="Ribosomal_uL15/eL18"/>
</dbReference>
<dbReference type="InterPro" id="IPR036227">
    <property type="entry name" value="Ribosomal_uL15/eL18_sf"/>
</dbReference>
<dbReference type="InterPro" id="IPR005749">
    <property type="entry name" value="Ribosomal_uL15_bac-type"/>
</dbReference>
<dbReference type="NCBIfam" id="TIGR01071">
    <property type="entry name" value="rplO_bact"/>
    <property type="match status" value="1"/>
</dbReference>
<dbReference type="PANTHER" id="PTHR12934">
    <property type="entry name" value="50S RIBOSOMAL PROTEIN L15"/>
    <property type="match status" value="1"/>
</dbReference>
<dbReference type="PANTHER" id="PTHR12934:SF11">
    <property type="entry name" value="LARGE RIBOSOMAL SUBUNIT PROTEIN UL15M"/>
    <property type="match status" value="1"/>
</dbReference>
<dbReference type="Pfam" id="PF00828">
    <property type="entry name" value="Ribosomal_L27A"/>
    <property type="match status" value="1"/>
</dbReference>
<dbReference type="SUPFAM" id="SSF52080">
    <property type="entry name" value="Ribosomal proteins L15p and L18e"/>
    <property type="match status" value="1"/>
</dbReference>